<gene>
    <name evidence="1" type="primary">ihfA</name>
    <name evidence="1" type="synonym">himA</name>
    <name type="ordered locus">KPN78578_21410</name>
    <name type="ORF">KPN_02174</name>
</gene>
<organism>
    <name type="scientific">Klebsiella pneumoniae subsp. pneumoniae (strain ATCC 700721 / MGH 78578)</name>
    <dbReference type="NCBI Taxonomy" id="272620"/>
    <lineage>
        <taxon>Bacteria</taxon>
        <taxon>Pseudomonadati</taxon>
        <taxon>Pseudomonadota</taxon>
        <taxon>Gammaproteobacteria</taxon>
        <taxon>Enterobacterales</taxon>
        <taxon>Enterobacteriaceae</taxon>
        <taxon>Klebsiella/Raoultella group</taxon>
        <taxon>Klebsiella</taxon>
        <taxon>Klebsiella pneumoniae complex</taxon>
    </lineage>
</organism>
<feature type="chain" id="PRO_1000060547" description="Integration host factor subunit alpha">
    <location>
        <begin position="1"/>
        <end position="99"/>
    </location>
</feature>
<feature type="region of interest" description="Disordered" evidence="2">
    <location>
        <begin position="49"/>
        <end position="75"/>
    </location>
</feature>
<keyword id="KW-0233">DNA recombination</keyword>
<keyword id="KW-0238">DNA-binding</keyword>
<keyword id="KW-0804">Transcription</keyword>
<keyword id="KW-0805">Transcription regulation</keyword>
<keyword id="KW-0810">Translation regulation</keyword>
<proteinExistence type="inferred from homology"/>
<name>IHFA_KLEP7</name>
<protein>
    <recommendedName>
        <fullName evidence="1">Integration host factor subunit alpha</fullName>
        <shortName evidence="1">IHF-alpha</shortName>
    </recommendedName>
</protein>
<accession>A6TAI1</accession>
<sequence>MALTKAEMSEYLFDKLGLSKRDAKELVELFFEEIRRALENGEQVKLSGFGNFDLRDKNQRPGRNPKTGEDIPITARRVVTFRPGQKLKSRVENASPKDK</sequence>
<dbReference type="EMBL" id="CP000647">
    <property type="protein sequence ID" value="ABR77602.1"/>
    <property type="molecule type" value="Genomic_DNA"/>
</dbReference>
<dbReference type="RefSeq" id="WP_002909098.1">
    <property type="nucleotide sequence ID" value="NC_009648.1"/>
</dbReference>
<dbReference type="SMR" id="A6TAI1"/>
<dbReference type="STRING" id="272620.KPN_02174"/>
<dbReference type="jPOST" id="A6TAI1"/>
<dbReference type="PaxDb" id="272620-KPN_02174"/>
<dbReference type="EnsemblBacteria" id="ABR77602">
    <property type="protein sequence ID" value="ABR77602"/>
    <property type="gene ID" value="KPN_02174"/>
</dbReference>
<dbReference type="GeneID" id="93272688"/>
<dbReference type="KEGG" id="kpn:KPN_02174"/>
<dbReference type="HOGENOM" id="CLU_105066_1_3_6"/>
<dbReference type="Proteomes" id="UP000000265">
    <property type="component" value="Chromosome"/>
</dbReference>
<dbReference type="GO" id="GO:0005829">
    <property type="term" value="C:cytosol"/>
    <property type="evidence" value="ECO:0007669"/>
    <property type="project" value="TreeGrafter"/>
</dbReference>
<dbReference type="GO" id="GO:0003677">
    <property type="term" value="F:DNA binding"/>
    <property type="evidence" value="ECO:0007669"/>
    <property type="project" value="UniProtKB-UniRule"/>
</dbReference>
<dbReference type="GO" id="GO:0030527">
    <property type="term" value="F:structural constituent of chromatin"/>
    <property type="evidence" value="ECO:0007669"/>
    <property type="project" value="InterPro"/>
</dbReference>
<dbReference type="GO" id="GO:0006310">
    <property type="term" value="P:DNA recombination"/>
    <property type="evidence" value="ECO:0007669"/>
    <property type="project" value="UniProtKB-UniRule"/>
</dbReference>
<dbReference type="GO" id="GO:0009893">
    <property type="term" value="P:positive regulation of metabolic process"/>
    <property type="evidence" value="ECO:0007669"/>
    <property type="project" value="UniProtKB-ARBA"/>
</dbReference>
<dbReference type="GO" id="GO:0006355">
    <property type="term" value="P:regulation of DNA-templated transcription"/>
    <property type="evidence" value="ECO:0007669"/>
    <property type="project" value="UniProtKB-UniRule"/>
</dbReference>
<dbReference type="GO" id="GO:0006417">
    <property type="term" value="P:regulation of translation"/>
    <property type="evidence" value="ECO:0007669"/>
    <property type="project" value="UniProtKB-UniRule"/>
</dbReference>
<dbReference type="CDD" id="cd13835">
    <property type="entry name" value="IHF_A"/>
    <property type="match status" value="1"/>
</dbReference>
<dbReference type="FunFam" id="4.10.520.10:FF:000002">
    <property type="entry name" value="Integration host factor subunit alpha"/>
    <property type="match status" value="1"/>
</dbReference>
<dbReference type="Gene3D" id="4.10.520.10">
    <property type="entry name" value="IHF-like DNA-binding proteins"/>
    <property type="match status" value="1"/>
</dbReference>
<dbReference type="HAMAP" id="MF_00380">
    <property type="entry name" value="IHF_alpha"/>
    <property type="match status" value="1"/>
</dbReference>
<dbReference type="InterPro" id="IPR000119">
    <property type="entry name" value="Hist_DNA-bd"/>
</dbReference>
<dbReference type="InterPro" id="IPR020816">
    <property type="entry name" value="Histone-like_DNA-bd_CS"/>
</dbReference>
<dbReference type="InterPro" id="IPR010992">
    <property type="entry name" value="IHF-like_DNA-bd_dom_sf"/>
</dbReference>
<dbReference type="InterPro" id="IPR005684">
    <property type="entry name" value="IHF_alpha"/>
</dbReference>
<dbReference type="NCBIfam" id="TIGR00987">
    <property type="entry name" value="himA"/>
    <property type="match status" value="1"/>
</dbReference>
<dbReference type="NCBIfam" id="NF001401">
    <property type="entry name" value="PRK00285.1"/>
    <property type="match status" value="1"/>
</dbReference>
<dbReference type="PANTHER" id="PTHR33175">
    <property type="entry name" value="DNA-BINDING PROTEIN HU"/>
    <property type="match status" value="1"/>
</dbReference>
<dbReference type="PANTHER" id="PTHR33175:SF2">
    <property type="entry name" value="INTEGRATION HOST FACTOR SUBUNIT ALPHA"/>
    <property type="match status" value="1"/>
</dbReference>
<dbReference type="Pfam" id="PF00216">
    <property type="entry name" value="Bac_DNA_binding"/>
    <property type="match status" value="1"/>
</dbReference>
<dbReference type="PRINTS" id="PR01727">
    <property type="entry name" value="DNABINDINGHU"/>
</dbReference>
<dbReference type="SMART" id="SM00411">
    <property type="entry name" value="BHL"/>
    <property type="match status" value="1"/>
</dbReference>
<dbReference type="SUPFAM" id="SSF47729">
    <property type="entry name" value="IHF-like DNA-binding proteins"/>
    <property type="match status" value="1"/>
</dbReference>
<dbReference type="PROSITE" id="PS00045">
    <property type="entry name" value="HISTONE_LIKE"/>
    <property type="match status" value="1"/>
</dbReference>
<reference key="1">
    <citation type="submission" date="2006-09" db="EMBL/GenBank/DDBJ databases">
        <authorList>
            <consortium name="The Klebsiella pneumonia Genome Sequencing Project"/>
            <person name="McClelland M."/>
            <person name="Sanderson E.K."/>
            <person name="Spieth J."/>
            <person name="Clifton W.S."/>
            <person name="Latreille P."/>
            <person name="Sabo A."/>
            <person name="Pepin K."/>
            <person name="Bhonagiri V."/>
            <person name="Porwollik S."/>
            <person name="Ali J."/>
            <person name="Wilson R.K."/>
        </authorList>
    </citation>
    <scope>NUCLEOTIDE SEQUENCE [LARGE SCALE GENOMIC DNA]</scope>
    <source>
        <strain>ATCC 700721 / MGH 78578</strain>
    </source>
</reference>
<evidence type="ECO:0000255" key="1">
    <source>
        <dbReference type="HAMAP-Rule" id="MF_00380"/>
    </source>
</evidence>
<evidence type="ECO:0000256" key="2">
    <source>
        <dbReference type="SAM" id="MobiDB-lite"/>
    </source>
</evidence>
<comment type="function">
    <text evidence="1">This protein is one of the two subunits of integration host factor, a specific DNA-binding protein that functions in genetic recombination as well as in transcriptional and translational control.</text>
</comment>
<comment type="subunit">
    <text evidence="1">Heterodimer of an alpha and a beta chain.</text>
</comment>
<comment type="similarity">
    <text evidence="1">Belongs to the bacterial histone-like protein family.</text>
</comment>